<protein>
    <recommendedName>
        <fullName>Uncharacterized protein YozW</fullName>
    </recommendedName>
</protein>
<name>YOZW_BACSU</name>
<dbReference type="EMBL" id="AL009126">
    <property type="protein sequence ID" value="CAX52632.1"/>
    <property type="molecule type" value="Genomic_DNA"/>
</dbReference>
<dbReference type="RefSeq" id="WP_003231348.1">
    <property type="nucleotide sequence ID" value="NZ_OZ025638.1"/>
</dbReference>
<dbReference type="RefSeq" id="YP_003097737.1">
    <property type="nucleotide sequence ID" value="NC_000964.3"/>
</dbReference>
<dbReference type="STRING" id="224308.BSU18898"/>
<dbReference type="PaxDb" id="224308-BSU18898"/>
<dbReference type="EnsemblBacteria" id="CAX52632">
    <property type="protein sequence ID" value="CAX52632"/>
    <property type="gene ID" value="BSU_18898"/>
</dbReference>
<dbReference type="GeneID" id="8303072"/>
<dbReference type="KEGG" id="bsu:BSU18898"/>
<dbReference type="PATRIC" id="fig|224308.179.peg.2062"/>
<dbReference type="InParanoid" id="C0H424"/>
<dbReference type="OrthoDB" id="2907224at2"/>
<dbReference type="BioCyc" id="BSUB:BSU18898-MONOMER"/>
<dbReference type="Proteomes" id="UP000001570">
    <property type="component" value="Chromosome"/>
</dbReference>
<keyword id="KW-1185">Reference proteome</keyword>
<accession>C0H424</accession>
<organism>
    <name type="scientific">Bacillus subtilis (strain 168)</name>
    <dbReference type="NCBI Taxonomy" id="224308"/>
    <lineage>
        <taxon>Bacteria</taxon>
        <taxon>Bacillati</taxon>
        <taxon>Bacillota</taxon>
        <taxon>Bacilli</taxon>
        <taxon>Bacillales</taxon>
        <taxon>Bacillaceae</taxon>
        <taxon>Bacillus</taxon>
    </lineage>
</organism>
<gene>
    <name type="primary">yozW</name>
    <name type="ordered locus">BSU18898</name>
</gene>
<proteinExistence type="predicted"/>
<sequence>MTEIKANSTVMIHVLADETLSSIKREYVEVDRKTEIGEKIIIVDKNDPDDEYENGAI</sequence>
<reference key="1">
    <citation type="journal article" date="1997" name="Nature">
        <title>The complete genome sequence of the Gram-positive bacterium Bacillus subtilis.</title>
        <authorList>
            <person name="Kunst F."/>
            <person name="Ogasawara N."/>
            <person name="Moszer I."/>
            <person name="Albertini A.M."/>
            <person name="Alloni G."/>
            <person name="Azevedo V."/>
            <person name="Bertero M.G."/>
            <person name="Bessieres P."/>
            <person name="Bolotin A."/>
            <person name="Borchert S."/>
            <person name="Borriss R."/>
            <person name="Boursier L."/>
            <person name="Brans A."/>
            <person name="Braun M."/>
            <person name="Brignell S.C."/>
            <person name="Bron S."/>
            <person name="Brouillet S."/>
            <person name="Bruschi C.V."/>
            <person name="Caldwell B."/>
            <person name="Capuano V."/>
            <person name="Carter N.M."/>
            <person name="Choi S.-K."/>
            <person name="Codani J.-J."/>
            <person name="Connerton I.F."/>
            <person name="Cummings N.J."/>
            <person name="Daniel R.A."/>
            <person name="Denizot F."/>
            <person name="Devine K.M."/>
            <person name="Duesterhoeft A."/>
            <person name="Ehrlich S.D."/>
            <person name="Emmerson P.T."/>
            <person name="Entian K.-D."/>
            <person name="Errington J."/>
            <person name="Fabret C."/>
            <person name="Ferrari E."/>
            <person name="Foulger D."/>
            <person name="Fritz C."/>
            <person name="Fujita M."/>
            <person name="Fujita Y."/>
            <person name="Fuma S."/>
            <person name="Galizzi A."/>
            <person name="Galleron N."/>
            <person name="Ghim S.-Y."/>
            <person name="Glaser P."/>
            <person name="Goffeau A."/>
            <person name="Golightly E.J."/>
            <person name="Grandi G."/>
            <person name="Guiseppi G."/>
            <person name="Guy B.J."/>
            <person name="Haga K."/>
            <person name="Haiech J."/>
            <person name="Harwood C.R."/>
            <person name="Henaut A."/>
            <person name="Hilbert H."/>
            <person name="Holsappel S."/>
            <person name="Hosono S."/>
            <person name="Hullo M.-F."/>
            <person name="Itaya M."/>
            <person name="Jones L.-M."/>
            <person name="Joris B."/>
            <person name="Karamata D."/>
            <person name="Kasahara Y."/>
            <person name="Klaerr-Blanchard M."/>
            <person name="Klein C."/>
            <person name="Kobayashi Y."/>
            <person name="Koetter P."/>
            <person name="Koningstein G."/>
            <person name="Krogh S."/>
            <person name="Kumano M."/>
            <person name="Kurita K."/>
            <person name="Lapidus A."/>
            <person name="Lardinois S."/>
            <person name="Lauber J."/>
            <person name="Lazarevic V."/>
            <person name="Lee S.-M."/>
            <person name="Levine A."/>
            <person name="Liu H."/>
            <person name="Masuda S."/>
            <person name="Mauel C."/>
            <person name="Medigue C."/>
            <person name="Medina N."/>
            <person name="Mellado R.P."/>
            <person name="Mizuno M."/>
            <person name="Moestl D."/>
            <person name="Nakai S."/>
            <person name="Noback M."/>
            <person name="Noone D."/>
            <person name="O'Reilly M."/>
            <person name="Ogawa K."/>
            <person name="Ogiwara A."/>
            <person name="Oudega B."/>
            <person name="Park S.-H."/>
            <person name="Parro V."/>
            <person name="Pohl T.M."/>
            <person name="Portetelle D."/>
            <person name="Porwollik S."/>
            <person name="Prescott A.M."/>
            <person name="Presecan E."/>
            <person name="Pujic P."/>
            <person name="Purnelle B."/>
            <person name="Rapoport G."/>
            <person name="Rey M."/>
            <person name="Reynolds S."/>
            <person name="Rieger M."/>
            <person name="Rivolta C."/>
            <person name="Rocha E."/>
            <person name="Roche B."/>
            <person name="Rose M."/>
            <person name="Sadaie Y."/>
            <person name="Sato T."/>
            <person name="Scanlan E."/>
            <person name="Schleich S."/>
            <person name="Schroeter R."/>
            <person name="Scoffone F."/>
            <person name="Sekiguchi J."/>
            <person name="Sekowska A."/>
            <person name="Seror S.J."/>
            <person name="Serror P."/>
            <person name="Shin B.-S."/>
            <person name="Soldo B."/>
            <person name="Sorokin A."/>
            <person name="Tacconi E."/>
            <person name="Takagi T."/>
            <person name="Takahashi H."/>
            <person name="Takemaru K."/>
            <person name="Takeuchi M."/>
            <person name="Tamakoshi A."/>
            <person name="Tanaka T."/>
            <person name="Terpstra P."/>
            <person name="Tognoni A."/>
            <person name="Tosato V."/>
            <person name="Uchiyama S."/>
            <person name="Vandenbol M."/>
            <person name="Vannier F."/>
            <person name="Vassarotti A."/>
            <person name="Viari A."/>
            <person name="Wambutt R."/>
            <person name="Wedler E."/>
            <person name="Wedler H."/>
            <person name="Weitzenegger T."/>
            <person name="Winters P."/>
            <person name="Wipat A."/>
            <person name="Yamamoto H."/>
            <person name="Yamane K."/>
            <person name="Yasumoto K."/>
            <person name="Yata K."/>
            <person name="Yoshida K."/>
            <person name="Yoshikawa H.-F."/>
            <person name="Zumstein E."/>
            <person name="Yoshikawa H."/>
            <person name="Danchin A."/>
        </authorList>
    </citation>
    <scope>NUCLEOTIDE SEQUENCE [LARGE SCALE GENOMIC DNA]</scope>
    <source>
        <strain>168</strain>
    </source>
</reference>
<feature type="chain" id="PRO_0000386669" description="Uncharacterized protein YozW">
    <location>
        <begin position="1"/>
        <end position="57"/>
    </location>
</feature>